<organism>
    <name type="scientific">African swine fever virus (isolate Tick/South Africa/Pretoriuskop Pr4/1996)</name>
    <name type="common">ASFV</name>
    <dbReference type="NCBI Taxonomy" id="561443"/>
    <lineage>
        <taxon>Viruses</taxon>
        <taxon>Varidnaviria</taxon>
        <taxon>Bamfordvirae</taxon>
        <taxon>Nucleocytoviricota</taxon>
        <taxon>Pokkesviricetes</taxon>
        <taxon>Asfuvirales</taxon>
        <taxon>Asfarviridae</taxon>
        <taxon>Asfivirus</taxon>
        <taxon>African swine fever virus</taxon>
    </lineage>
</organism>
<protein>
    <recommendedName>
        <fullName evidence="2">DNA-directed RNA polymerase RPB10 homolog</fullName>
        <shortName evidence="3">RPB10 homolog</shortName>
    </recommendedName>
</protein>
<organismHost>
    <name type="scientific">Ornithodoros</name>
    <name type="common">relapsing fever ticks</name>
    <dbReference type="NCBI Taxonomy" id="6937"/>
</organismHost>
<organismHost>
    <name type="scientific">Phacochoerus aethiopicus</name>
    <name type="common">Warthog</name>
    <dbReference type="NCBI Taxonomy" id="85517"/>
</organismHost>
<organismHost>
    <name type="scientific">Phacochoerus africanus</name>
    <name type="common">Warthog</name>
    <dbReference type="NCBI Taxonomy" id="41426"/>
</organismHost>
<organismHost>
    <name type="scientific">Potamochoerus larvatus</name>
    <name type="common">Bushpig</name>
    <dbReference type="NCBI Taxonomy" id="273792"/>
</organismHost>
<organismHost>
    <name type="scientific">Sus scrofa</name>
    <name type="common">Pig</name>
    <dbReference type="NCBI Taxonomy" id="9823"/>
</organismHost>
<reference key="1">
    <citation type="submission" date="2003-03" db="EMBL/GenBank/DDBJ databases">
        <title>African swine fever virus genomes.</title>
        <authorList>
            <person name="Kutish G.F."/>
            <person name="Rock D.L."/>
        </authorList>
    </citation>
    <scope>NUCLEOTIDE SEQUENCE [GENOMIC DNA]</scope>
</reference>
<accession>P0C979</accession>
<keyword id="KW-0240">DNA-directed RNA polymerase</keyword>
<keyword id="KW-1035">Host cytoplasm</keyword>
<keyword id="KW-0479">Metal-binding</keyword>
<keyword id="KW-0804">Transcription</keyword>
<keyword id="KW-1195">Viral transcription</keyword>
<keyword id="KW-0862">Zinc</keyword>
<evidence type="ECO:0000250" key="1">
    <source>
        <dbReference type="UniProtKB" id="P22139"/>
    </source>
</evidence>
<evidence type="ECO:0000250" key="2">
    <source>
        <dbReference type="UniProtKB" id="P42488"/>
    </source>
</evidence>
<evidence type="ECO:0000305" key="3"/>
<comment type="function">
    <text evidence="1">Component of the DNA-directed RNA polymerase (RNAP) that catalyzes the transcription in the cytoplasm of viral DNA into RNA using the four ribonucleoside triphosphates as substrates.</text>
</comment>
<comment type="subunit">
    <text evidence="2">Part of the viral DNA-directed RNA polymerase that consists of 8 polII-like subunits (RPB1, RPB2, RPB3, RPB5, RPB6, RPB7, RPB9, RPB10), a capping enzyme and a termination factor.</text>
</comment>
<comment type="subcellular location">
    <subcellularLocation>
        <location evidence="3">Host cytoplasm</location>
    </subcellularLocation>
</comment>
<comment type="similarity">
    <text evidence="3">Belongs to the archaeal RpoN/eukaryotic RPB10 RNA polymerase subunit family.</text>
</comment>
<gene>
    <name type="ordered locus">Pret-107</name>
</gene>
<feature type="chain" id="PRO_0000373078" description="DNA-directed RNA polymerase RPB10 homolog">
    <location>
        <begin position="1"/>
        <end position="80"/>
    </location>
</feature>
<feature type="binding site" evidence="1">
    <location>
        <position position="7"/>
    </location>
    <ligand>
        <name>Zn(2+)</name>
        <dbReference type="ChEBI" id="CHEBI:29105"/>
    </ligand>
</feature>
<feature type="binding site" evidence="1">
    <location>
        <position position="10"/>
    </location>
    <ligand>
        <name>Zn(2+)</name>
        <dbReference type="ChEBI" id="CHEBI:29105"/>
    </ligand>
</feature>
<feature type="binding site" evidence="1">
    <location>
        <position position="65"/>
    </location>
    <ligand>
        <name>Zn(2+)</name>
        <dbReference type="ChEBI" id="CHEBI:29105"/>
    </ligand>
</feature>
<feature type="binding site" evidence="1">
    <location>
        <position position="66"/>
    </location>
    <ligand>
        <name>Zn(2+)</name>
        <dbReference type="ChEBI" id="CHEBI:29105"/>
    </ligand>
</feature>
<sequence length="80" mass="9031">MLIPVVCFTCGFPIGTYAAIFDKARTEYIKTKMGGTLPQNIPLDASLQIELKDLITALGIPMRVCCRTHLITTLDYRKYY</sequence>
<name>RPB10_ASFP4</name>
<dbReference type="EMBL" id="AY261363">
    <property type="status" value="NOT_ANNOTATED_CDS"/>
    <property type="molecule type" value="Genomic_DNA"/>
</dbReference>
<dbReference type="SMR" id="P0C979"/>
<dbReference type="Proteomes" id="UP000000859">
    <property type="component" value="Segment"/>
</dbReference>
<dbReference type="GO" id="GO:0000428">
    <property type="term" value="C:DNA-directed RNA polymerase complex"/>
    <property type="evidence" value="ECO:0007669"/>
    <property type="project" value="UniProtKB-KW"/>
</dbReference>
<dbReference type="GO" id="GO:0030430">
    <property type="term" value="C:host cell cytoplasm"/>
    <property type="evidence" value="ECO:0007669"/>
    <property type="project" value="UniProtKB-SubCell"/>
</dbReference>
<dbReference type="GO" id="GO:0003677">
    <property type="term" value="F:DNA binding"/>
    <property type="evidence" value="ECO:0007669"/>
    <property type="project" value="InterPro"/>
</dbReference>
<dbReference type="GO" id="GO:0003899">
    <property type="term" value="F:DNA-directed RNA polymerase activity"/>
    <property type="evidence" value="ECO:0007669"/>
    <property type="project" value="InterPro"/>
</dbReference>
<dbReference type="GO" id="GO:0008270">
    <property type="term" value="F:zinc ion binding"/>
    <property type="evidence" value="ECO:0007669"/>
    <property type="project" value="InterPro"/>
</dbReference>
<dbReference type="GO" id="GO:0006351">
    <property type="term" value="P:DNA-templated transcription"/>
    <property type="evidence" value="ECO:0007669"/>
    <property type="project" value="InterPro"/>
</dbReference>
<dbReference type="GO" id="GO:0019083">
    <property type="term" value="P:viral transcription"/>
    <property type="evidence" value="ECO:0007669"/>
    <property type="project" value="UniProtKB-KW"/>
</dbReference>
<dbReference type="Gene3D" id="1.10.10.60">
    <property type="entry name" value="Homeodomain-like"/>
    <property type="match status" value="1"/>
</dbReference>
<dbReference type="InterPro" id="IPR023580">
    <property type="entry name" value="RNA_pol_su_RPB10"/>
</dbReference>
<dbReference type="InterPro" id="IPR020789">
    <property type="entry name" value="RNA_pol_suN_Zn-BS"/>
</dbReference>
<dbReference type="InterPro" id="IPR000268">
    <property type="entry name" value="RPABC5/Rpb10"/>
</dbReference>
<dbReference type="Pfam" id="PF01194">
    <property type="entry name" value="RNA_pol_N"/>
    <property type="match status" value="1"/>
</dbReference>
<dbReference type="SUPFAM" id="SSF46924">
    <property type="entry name" value="RNA polymerase subunit RPB10"/>
    <property type="match status" value="1"/>
</dbReference>
<dbReference type="PROSITE" id="PS01112">
    <property type="entry name" value="RNA_POL_N_8KD"/>
    <property type="match status" value="1"/>
</dbReference>
<proteinExistence type="inferred from homology"/>